<evidence type="ECO:0000255" key="1"/>
<evidence type="ECO:0000256" key="2">
    <source>
        <dbReference type="SAM" id="MobiDB-lite"/>
    </source>
</evidence>
<evidence type="ECO:0000305" key="3"/>
<evidence type="ECO:0007744" key="4">
    <source>
    </source>
</evidence>
<evidence type="ECO:0007744" key="5">
    <source>
    </source>
</evidence>
<evidence type="ECO:0007744" key="6">
    <source>
    </source>
</evidence>
<evidence type="ECO:0007744" key="7">
    <source>
    </source>
</evidence>
<proteinExistence type="evidence at protein level"/>
<protein>
    <recommendedName>
        <fullName>Negative regulator of RAS-cAMP pathway</fullName>
    </recommendedName>
</protein>
<sequence>MSREAFDVPNIGTNKFLKVTPNLFTPERLNLFDDVELYLTLIKASKCVEQGERLHNISWRILNKAVLKEHNINRSKKRDGVKNIYYVLNPNNKQPIKPKQAAVKQPPLQKANLPPTTAKQNVLTRPMTSPAIAQGAHDRSLDNPNSTNNDVKNDVAPNRQFSKSTTSGLFSNFADKYQKMKNVNHVANKEEPQTIITGFDTSTVITKKPLQSRRSRSPFQHIGDMNMNCIDNETSKSTSPTLENMGSRKSSFPQKESLFGRPRSYKNDQNGQLSLSKTSSRKGKNKIFFSSEDEDSDWDSVSNDSEFYADEDDEEYDDYNEEEADQYYRRQWDKLLFAKNQQNLDSTKSSVSSANTINSNTSHDPVRKSLLSGLFLSEANSNSNNHNTAHSEYASKHVSPTPQSSHSNIGPQPQQNPPSANGIKQQKPSLKTSNVTALASLSPPQPSNNERLSMDIQKDFKTDNESNHLYESNAPLTAQTILPTALSTHMFLPNNIHQQRMAIATGSNTRHRFSRRQSMDIPSKNRNTGFLKTRMEISEEEKMVRTISRLDNTSIANSNGNGNDDTSNQRTEALGRKTSNGGRI</sequence>
<comment type="function">
    <text>Negative regulator of Ras-cAMP pathway. Involved in transcriptional regulation of galactose-inducible genes.</text>
</comment>
<comment type="interaction">
    <interactant intactId="EBI-10978">
        <id>P34072</id>
    </interactant>
    <interactant intactId="EBI-16322">
        <id>P32608</id>
        <label>RTG2</label>
    </interactant>
    <organismsDiffer>false</organismsDiffer>
    <experiments>3</experiments>
</comment>
<comment type="interaction">
    <interactant intactId="EBI-10978">
        <id>P34072</id>
    </interactant>
    <interactant intactId="EBI-19374">
        <id>P35169</id>
        <label>TOR1</label>
    </interactant>
    <organismsDiffer>false</organismsDiffer>
    <experiments>3</experiments>
</comment>
<comment type="subcellular location">
    <subcellularLocation>
        <location>Nucleus</location>
    </subcellularLocation>
</comment>
<comment type="sequence caution" evidence="3">
    <conflict type="erroneous gene model prediction">
        <sequence resource="EMBL-CDS" id="CAA60181"/>
    </conflict>
</comment>
<dbReference type="EMBL" id="X86470">
    <property type="protein sequence ID" value="CAA60181.1"/>
    <property type="status" value="ALT_SEQ"/>
    <property type="molecule type" value="Genomic_DNA"/>
</dbReference>
<dbReference type="EMBL" id="X86470">
    <property type="protein sequence ID" value="CAA60182.1"/>
    <property type="molecule type" value="Genomic_DNA"/>
</dbReference>
<dbReference type="EMBL" id="Z71352">
    <property type="protein sequence ID" value="CAA95950.1"/>
    <property type="molecule type" value="Genomic_DNA"/>
</dbReference>
<dbReference type="EMBL" id="D13715">
    <property type="protein sequence ID" value="BAA02868.1"/>
    <property type="molecule type" value="Genomic_DNA"/>
</dbReference>
<dbReference type="EMBL" id="BK006947">
    <property type="protein sequence ID" value="DAA10469.1"/>
    <property type="molecule type" value="Genomic_DNA"/>
</dbReference>
<dbReference type="PIR" id="S53902">
    <property type="entry name" value="S53902"/>
</dbReference>
<dbReference type="RefSeq" id="NP_014323.1">
    <property type="nucleotide sequence ID" value="NM_001182914.1"/>
</dbReference>
<dbReference type="SMR" id="P34072"/>
<dbReference type="BioGRID" id="35747">
    <property type="interactions" value="387"/>
</dbReference>
<dbReference type="DIP" id="DIP-6677N"/>
<dbReference type="FunCoup" id="P34072">
    <property type="interactions" value="234"/>
</dbReference>
<dbReference type="IntAct" id="P34072">
    <property type="interactions" value="21"/>
</dbReference>
<dbReference type="MINT" id="P34072"/>
<dbReference type="STRING" id="4932.YNL076W"/>
<dbReference type="GlyGen" id="P34072">
    <property type="glycosylation" value="2 sites, 1 O-linked glycan (1 site)"/>
</dbReference>
<dbReference type="iPTMnet" id="P34072"/>
<dbReference type="PaxDb" id="4932-YNL076W"/>
<dbReference type="PeptideAtlas" id="P34072"/>
<dbReference type="EnsemblFungi" id="YNL076W_mRNA">
    <property type="protein sequence ID" value="YNL076W"/>
    <property type="gene ID" value="YNL076W"/>
</dbReference>
<dbReference type="GeneID" id="855648"/>
<dbReference type="KEGG" id="sce:YNL076W"/>
<dbReference type="AGR" id="SGD:S000005020"/>
<dbReference type="SGD" id="S000005020">
    <property type="gene designation" value="MKS1"/>
</dbReference>
<dbReference type="VEuPathDB" id="FungiDB:YNL076W"/>
<dbReference type="eggNOG" id="ENOG502RFNU">
    <property type="taxonomic scope" value="Eukaryota"/>
</dbReference>
<dbReference type="HOGENOM" id="CLU_023053_0_0_1"/>
<dbReference type="InParanoid" id="P34072"/>
<dbReference type="OMA" id="MFLPNNI"/>
<dbReference type="OrthoDB" id="5054775at2759"/>
<dbReference type="BioCyc" id="YEAST:G3O-33105-MONOMER"/>
<dbReference type="BioGRID-ORCS" id="855648">
    <property type="hits" value="0 hits in 10 CRISPR screens"/>
</dbReference>
<dbReference type="PRO" id="PR:P34072"/>
<dbReference type="Proteomes" id="UP000002311">
    <property type="component" value="Chromosome XIV"/>
</dbReference>
<dbReference type="RNAct" id="P34072">
    <property type="molecule type" value="protein"/>
</dbReference>
<dbReference type="GO" id="GO:0005737">
    <property type="term" value="C:cytoplasm"/>
    <property type="evidence" value="ECO:0000314"/>
    <property type="project" value="SGD"/>
</dbReference>
<dbReference type="GO" id="GO:0005634">
    <property type="term" value="C:nucleus"/>
    <property type="evidence" value="ECO:0007669"/>
    <property type="project" value="UniProtKB-SubCell"/>
</dbReference>
<dbReference type="GO" id="GO:0031930">
    <property type="term" value="P:mitochondria-nucleus signaling pathway"/>
    <property type="evidence" value="ECO:0000353"/>
    <property type="project" value="SGD"/>
</dbReference>
<dbReference type="GO" id="GO:0000122">
    <property type="term" value="P:negative regulation of transcription by RNA polymerase II"/>
    <property type="evidence" value="ECO:0000315"/>
    <property type="project" value="SGD"/>
</dbReference>
<dbReference type="GO" id="GO:0006808">
    <property type="term" value="P:regulation of nitrogen utilization"/>
    <property type="evidence" value="ECO:0000315"/>
    <property type="project" value="SGD"/>
</dbReference>
<dbReference type="GO" id="GO:2000220">
    <property type="term" value="P:regulation of pseudohyphal growth"/>
    <property type="evidence" value="ECO:0000315"/>
    <property type="project" value="SGD"/>
</dbReference>
<dbReference type="InterPro" id="IPR013860">
    <property type="entry name" value="AreA_GATA"/>
</dbReference>
<dbReference type="InterPro" id="IPR053043">
    <property type="entry name" value="Ras-cAMP_regulatory"/>
</dbReference>
<dbReference type="PANTHER" id="PTHR28014">
    <property type="entry name" value="NEGATIVE REGULATOR OF RAS-CAMP PATHWAY"/>
    <property type="match status" value="1"/>
</dbReference>
<dbReference type="PANTHER" id="PTHR28014:SF1">
    <property type="entry name" value="NEGATIVE REGULATOR OF RAS-CAMP PATHWAY"/>
    <property type="match status" value="1"/>
</dbReference>
<dbReference type="Pfam" id="PF08550">
    <property type="entry name" value="GATA_AreA"/>
    <property type="match status" value="1"/>
</dbReference>
<reference key="1">
    <citation type="journal article" date="1996" name="Yeast">
        <title>Sequencing a cosmid clone of Saccharomyces cerevisiae chromosome XIV reveals 12 new open reading frames (ORFs) and an ancient duplication of six ORFs.</title>
        <authorList>
            <person name="Poehlmann R."/>
            <person name="Philippsen P."/>
        </authorList>
    </citation>
    <scope>NUCLEOTIDE SEQUENCE [GENOMIC DNA]</scope>
    <source>
        <strain>ATCC 96604 / S288c / FY1679</strain>
    </source>
</reference>
<reference key="2">
    <citation type="journal article" date="1997" name="Nature">
        <title>The nucleotide sequence of Saccharomyces cerevisiae chromosome XIV and its evolutionary implications.</title>
        <authorList>
            <person name="Philippsen P."/>
            <person name="Kleine K."/>
            <person name="Poehlmann R."/>
            <person name="Duesterhoeft A."/>
            <person name="Hamberg K."/>
            <person name="Hegemann J.H."/>
            <person name="Obermaier B."/>
            <person name="Urrestarazu L.A."/>
            <person name="Aert R."/>
            <person name="Albermann K."/>
            <person name="Altmann R."/>
            <person name="Andre B."/>
            <person name="Baladron V."/>
            <person name="Ballesta J.P.G."/>
            <person name="Becam A.-M."/>
            <person name="Beinhauer J.D."/>
            <person name="Boskovic J."/>
            <person name="Buitrago M.J."/>
            <person name="Bussereau F."/>
            <person name="Coster F."/>
            <person name="Crouzet M."/>
            <person name="D'Angelo M."/>
            <person name="Dal Pero F."/>
            <person name="De Antoni A."/>
            <person name="del Rey F."/>
            <person name="Doignon F."/>
            <person name="Domdey H."/>
            <person name="Dubois E."/>
            <person name="Fiedler T.A."/>
            <person name="Fleig U."/>
            <person name="Floeth M."/>
            <person name="Fritz C."/>
            <person name="Gaillardin C."/>
            <person name="Garcia-Cantalejo J.M."/>
            <person name="Glansdorff N."/>
            <person name="Goffeau A."/>
            <person name="Gueldener U."/>
            <person name="Herbert C.J."/>
            <person name="Heumann K."/>
            <person name="Heuss-Neitzel D."/>
            <person name="Hilbert H."/>
            <person name="Hinni K."/>
            <person name="Iraqui Houssaini I."/>
            <person name="Jacquet M."/>
            <person name="Jimenez A."/>
            <person name="Jonniaux J.-L."/>
            <person name="Karpfinger-Hartl L."/>
            <person name="Lanfranchi G."/>
            <person name="Lepingle A."/>
            <person name="Levesque H."/>
            <person name="Lyck R."/>
            <person name="Maftahi M."/>
            <person name="Mallet L."/>
            <person name="Maurer C.T.C."/>
            <person name="Messenguy F."/>
            <person name="Mewes H.-W."/>
            <person name="Moestl D."/>
            <person name="Nasr F."/>
            <person name="Nicaud J.-M."/>
            <person name="Niedenthal R.K."/>
            <person name="Pandolfo D."/>
            <person name="Pierard A."/>
            <person name="Piravandi E."/>
            <person name="Planta R.J."/>
            <person name="Pohl T.M."/>
            <person name="Purnelle B."/>
            <person name="Rebischung C."/>
            <person name="Remacha M.A."/>
            <person name="Revuelta J.L."/>
            <person name="Rinke M."/>
            <person name="Saiz J.E."/>
            <person name="Sartorello F."/>
            <person name="Scherens B."/>
            <person name="Sen-Gupta M."/>
            <person name="Soler-Mira A."/>
            <person name="Urbanus J.H.M."/>
            <person name="Valle G."/>
            <person name="Van Dyck L."/>
            <person name="Verhasselt P."/>
            <person name="Vierendeels F."/>
            <person name="Vissers S."/>
            <person name="Voet M."/>
            <person name="Volckaert G."/>
            <person name="Wach A."/>
            <person name="Wambutt R."/>
            <person name="Wedler H."/>
            <person name="Zollner A."/>
            <person name="Hani J."/>
        </authorList>
    </citation>
    <scope>NUCLEOTIDE SEQUENCE [LARGE SCALE GENOMIC DNA]</scope>
    <source>
        <strain>ATCC 204508 / S288c</strain>
    </source>
</reference>
<reference key="3">
    <citation type="journal article" date="2014" name="G3 (Bethesda)">
        <title>The reference genome sequence of Saccharomyces cerevisiae: Then and now.</title>
        <authorList>
            <person name="Engel S.R."/>
            <person name="Dietrich F.S."/>
            <person name="Fisk D.G."/>
            <person name="Binkley G."/>
            <person name="Balakrishnan R."/>
            <person name="Costanzo M.C."/>
            <person name="Dwight S.S."/>
            <person name="Hitz B.C."/>
            <person name="Karra K."/>
            <person name="Nash R.S."/>
            <person name="Weng S."/>
            <person name="Wong E.D."/>
            <person name="Lloyd P."/>
            <person name="Skrzypek M.S."/>
            <person name="Miyasato S.R."/>
            <person name="Simison M."/>
            <person name="Cherry J.M."/>
        </authorList>
    </citation>
    <scope>GENOME REANNOTATION</scope>
    <source>
        <strain>ATCC 204508 / S288c</strain>
    </source>
</reference>
<reference key="4">
    <citation type="journal article" date="1993" name="Mol. Gen. Genet.">
        <title>Characterization of the MKS1 gene, a new negative regulator of the Ras-cyclic AMP pathway in Saccharomyces cerevisiae.</title>
        <authorList>
            <person name="Matsuura A."/>
            <person name="Anraku Y."/>
        </authorList>
    </citation>
    <scope>NUCLEOTIDE SEQUENCE [GENOMIC DNA] OF 127-584</scope>
</reference>
<reference key="5">
    <citation type="journal article" date="2005" name="Mol. Cell. Proteomics">
        <title>Quantitative phosphoproteomics applied to the yeast pheromone signaling pathway.</title>
        <authorList>
            <person name="Gruhler A."/>
            <person name="Olsen J.V."/>
            <person name="Mohammed S."/>
            <person name="Mortensen P."/>
            <person name="Faergeman N.J."/>
            <person name="Mann M."/>
            <person name="Jensen O.N."/>
        </authorList>
    </citation>
    <scope>PHOSPHORYLATION [LARGE SCALE ANALYSIS] AT SER-442</scope>
    <scope>IDENTIFICATION BY MASS SPECTROMETRY [LARGE SCALE ANALYSIS]</scope>
    <source>
        <strain>YAL6B</strain>
    </source>
</reference>
<reference key="6">
    <citation type="journal article" date="2007" name="J. Proteome Res.">
        <title>Large-scale phosphorylation analysis of alpha-factor-arrested Saccharomyces cerevisiae.</title>
        <authorList>
            <person name="Li X."/>
            <person name="Gerber S.A."/>
            <person name="Rudner A.D."/>
            <person name="Beausoleil S.A."/>
            <person name="Haas W."/>
            <person name="Villen J."/>
            <person name="Elias J.E."/>
            <person name="Gygi S.P."/>
        </authorList>
    </citation>
    <scope>PHOSPHORYLATION [LARGE SCALE ANALYSIS] AT SER-247</scope>
    <scope>IDENTIFICATION BY MASS SPECTROMETRY [LARGE SCALE ANALYSIS]</scope>
    <source>
        <strain>ADR376</strain>
    </source>
</reference>
<reference key="7">
    <citation type="journal article" date="2007" name="Proc. Natl. Acad. Sci. U.S.A.">
        <title>Analysis of phosphorylation sites on proteins from Saccharomyces cerevisiae by electron transfer dissociation (ETD) mass spectrometry.</title>
        <authorList>
            <person name="Chi A."/>
            <person name="Huttenhower C."/>
            <person name="Geer L.Y."/>
            <person name="Coon J.J."/>
            <person name="Syka J.E.P."/>
            <person name="Bai D.L."/>
            <person name="Shabanowitz J."/>
            <person name="Burke D.J."/>
            <person name="Troyanskaya O.G."/>
            <person name="Hunt D.F."/>
        </authorList>
    </citation>
    <scope>IDENTIFICATION BY MASS SPECTROMETRY [LARGE SCALE ANALYSIS]</scope>
</reference>
<reference key="8">
    <citation type="journal article" date="2008" name="Mol. Cell. Proteomics">
        <title>A multidimensional chromatography technology for in-depth phosphoproteome analysis.</title>
        <authorList>
            <person name="Albuquerque C.P."/>
            <person name="Smolka M.B."/>
            <person name="Payne S.H."/>
            <person name="Bafna V."/>
            <person name="Eng J."/>
            <person name="Zhou H."/>
        </authorList>
    </citation>
    <scope>PHOSPHORYLATION [LARGE SCALE ANALYSIS] AT THR-25; SER-247 AND SER-276</scope>
    <scope>IDENTIFICATION BY MASS SPECTROMETRY [LARGE SCALE ANALYSIS]</scope>
</reference>
<reference key="9">
    <citation type="journal article" date="2009" name="Science">
        <title>Global analysis of Cdk1 substrate phosphorylation sites provides insights into evolution.</title>
        <authorList>
            <person name="Holt L.J."/>
            <person name="Tuch B.B."/>
            <person name="Villen J."/>
            <person name="Johnson A.D."/>
            <person name="Gygi S.P."/>
            <person name="Morgan D.O."/>
        </authorList>
    </citation>
    <scope>PHOSPHORYLATION [LARGE SCALE ANALYSIS] AT SER-442</scope>
    <scope>IDENTIFICATION BY MASS SPECTROMETRY [LARGE SCALE ANALYSIS]</scope>
</reference>
<keyword id="KW-0539">Nucleus</keyword>
<keyword id="KW-0597">Phosphoprotein</keyword>
<keyword id="KW-1185">Reference proteome</keyword>
<keyword id="KW-0678">Repressor</keyword>
<keyword id="KW-0804">Transcription</keyword>
<keyword id="KW-0805">Transcription regulation</keyword>
<accession>P34072</accession>
<accession>D6W1A3</accession>
<accession>Q02533</accession>
<organism>
    <name type="scientific">Saccharomyces cerevisiae (strain ATCC 204508 / S288c)</name>
    <name type="common">Baker's yeast</name>
    <dbReference type="NCBI Taxonomy" id="559292"/>
    <lineage>
        <taxon>Eukaryota</taxon>
        <taxon>Fungi</taxon>
        <taxon>Dikarya</taxon>
        <taxon>Ascomycota</taxon>
        <taxon>Saccharomycotina</taxon>
        <taxon>Saccharomycetes</taxon>
        <taxon>Saccharomycetales</taxon>
        <taxon>Saccharomycetaceae</taxon>
        <taxon>Saccharomyces</taxon>
    </lineage>
</organism>
<name>MKS1_YEAST</name>
<feature type="chain" id="PRO_0000096494" description="Negative regulator of RAS-cAMP pathway">
    <location>
        <begin position="1"/>
        <end position="584"/>
    </location>
</feature>
<feature type="region of interest" description="Disordered" evidence="2">
    <location>
        <begin position="95"/>
        <end position="167"/>
    </location>
</feature>
<feature type="region of interest" description="Disordered" evidence="2">
    <location>
        <begin position="209"/>
        <end position="279"/>
    </location>
</feature>
<feature type="region of interest" description="Disordered" evidence="2">
    <location>
        <begin position="291"/>
        <end position="320"/>
    </location>
</feature>
<feature type="region of interest" description="Disordered" evidence="2">
    <location>
        <begin position="343"/>
        <end position="366"/>
    </location>
</feature>
<feature type="region of interest" description="Disordered" evidence="2">
    <location>
        <begin position="381"/>
        <end position="432"/>
    </location>
</feature>
<feature type="region of interest" description="Disordered" evidence="2">
    <location>
        <begin position="551"/>
        <end position="584"/>
    </location>
</feature>
<feature type="compositionally biased region" description="Polar residues" evidence="2">
    <location>
        <begin position="114"/>
        <end position="127"/>
    </location>
</feature>
<feature type="compositionally biased region" description="Polar residues" evidence="2">
    <location>
        <begin position="229"/>
        <end position="254"/>
    </location>
</feature>
<feature type="compositionally biased region" description="Polar residues" evidence="2">
    <location>
        <begin position="267"/>
        <end position="278"/>
    </location>
</feature>
<feature type="compositionally biased region" description="Acidic residues" evidence="2">
    <location>
        <begin position="307"/>
        <end position="320"/>
    </location>
</feature>
<feature type="compositionally biased region" description="Polar residues" evidence="2">
    <location>
        <begin position="343"/>
        <end position="363"/>
    </location>
</feature>
<feature type="compositionally biased region" description="Low complexity" evidence="2">
    <location>
        <begin position="381"/>
        <end position="392"/>
    </location>
</feature>
<feature type="compositionally biased region" description="Polar residues" evidence="2">
    <location>
        <begin position="398"/>
        <end position="432"/>
    </location>
</feature>
<feature type="compositionally biased region" description="Low complexity" evidence="2">
    <location>
        <begin position="557"/>
        <end position="568"/>
    </location>
</feature>
<feature type="modified residue" description="Phosphothreonine" evidence="6">
    <location>
        <position position="25"/>
    </location>
</feature>
<feature type="modified residue" description="Phosphoserine" evidence="5 6">
    <location>
        <position position="247"/>
    </location>
</feature>
<feature type="modified residue" description="Phosphoserine" evidence="6">
    <location>
        <position position="276"/>
    </location>
</feature>
<feature type="modified residue" description="Phosphoserine" evidence="4 7">
    <location>
        <position position="442"/>
    </location>
</feature>
<feature type="modified residue" description="Phosphoserine; by PKA" evidence="1">
    <location>
        <position position="518"/>
    </location>
</feature>
<gene>
    <name type="primary">MKS1</name>
    <name type="synonym">LYS80</name>
    <name type="ordered locus">YNL076W</name>
    <name type="ORF">N2344</name>
    <name type="ORF">N2347</name>
</gene>